<proteinExistence type="inferred from homology"/>
<organism>
    <name type="scientific">Staphylococcus aureus (strain JH9)</name>
    <dbReference type="NCBI Taxonomy" id="359786"/>
    <lineage>
        <taxon>Bacteria</taxon>
        <taxon>Bacillati</taxon>
        <taxon>Bacillota</taxon>
        <taxon>Bacilli</taxon>
        <taxon>Bacillales</taxon>
        <taxon>Staphylococcaceae</taxon>
        <taxon>Staphylococcus</taxon>
    </lineage>
</organism>
<dbReference type="EMBL" id="CP000703">
    <property type="protein sequence ID" value="ABQ48965.1"/>
    <property type="molecule type" value="Genomic_DNA"/>
</dbReference>
<dbReference type="RefSeq" id="WP_001060842.1">
    <property type="nucleotide sequence ID" value="NC_009487.1"/>
</dbReference>
<dbReference type="SMR" id="A5IRZ2"/>
<dbReference type="KEGG" id="saj:SaurJH9_1165"/>
<dbReference type="HOGENOM" id="CLU_020088_2_0_9"/>
<dbReference type="GO" id="GO:0005886">
    <property type="term" value="C:plasma membrane"/>
    <property type="evidence" value="ECO:0007669"/>
    <property type="project" value="UniProtKB-SubCell"/>
</dbReference>
<dbReference type="GO" id="GO:0015086">
    <property type="term" value="F:cadmium ion transmembrane transporter activity"/>
    <property type="evidence" value="ECO:0007669"/>
    <property type="project" value="TreeGrafter"/>
</dbReference>
<dbReference type="GO" id="GO:0005384">
    <property type="term" value="F:manganese ion transmembrane transporter activity"/>
    <property type="evidence" value="ECO:0007669"/>
    <property type="project" value="TreeGrafter"/>
</dbReference>
<dbReference type="GO" id="GO:0046872">
    <property type="term" value="F:metal ion binding"/>
    <property type="evidence" value="ECO:0007669"/>
    <property type="project" value="UniProtKB-UniRule"/>
</dbReference>
<dbReference type="GO" id="GO:0015293">
    <property type="term" value="F:symporter activity"/>
    <property type="evidence" value="ECO:0007669"/>
    <property type="project" value="UniProtKB-UniRule"/>
</dbReference>
<dbReference type="GO" id="GO:0034755">
    <property type="term" value="P:iron ion transmembrane transport"/>
    <property type="evidence" value="ECO:0007669"/>
    <property type="project" value="TreeGrafter"/>
</dbReference>
<dbReference type="HAMAP" id="MF_00221">
    <property type="entry name" value="NRAMP"/>
    <property type="match status" value="1"/>
</dbReference>
<dbReference type="InterPro" id="IPR001046">
    <property type="entry name" value="NRAMP_fam"/>
</dbReference>
<dbReference type="NCBIfam" id="TIGR01197">
    <property type="entry name" value="nramp"/>
    <property type="match status" value="1"/>
</dbReference>
<dbReference type="NCBIfam" id="NF037982">
    <property type="entry name" value="Nramp_1"/>
    <property type="match status" value="1"/>
</dbReference>
<dbReference type="NCBIfam" id="NF001923">
    <property type="entry name" value="PRK00701.1"/>
    <property type="match status" value="1"/>
</dbReference>
<dbReference type="PANTHER" id="PTHR11706:SF33">
    <property type="entry name" value="NATURAL RESISTANCE-ASSOCIATED MACROPHAGE PROTEIN 2"/>
    <property type="match status" value="1"/>
</dbReference>
<dbReference type="PANTHER" id="PTHR11706">
    <property type="entry name" value="SOLUTE CARRIER PROTEIN FAMILY 11 MEMBER"/>
    <property type="match status" value="1"/>
</dbReference>
<dbReference type="Pfam" id="PF01566">
    <property type="entry name" value="Nramp"/>
    <property type="match status" value="1"/>
</dbReference>
<dbReference type="PRINTS" id="PR00447">
    <property type="entry name" value="NATRESASSCMP"/>
</dbReference>
<protein>
    <recommendedName>
        <fullName evidence="1">Divalent metal cation transporter MntH</fullName>
    </recommendedName>
</protein>
<accession>A5IRZ2</accession>
<reference key="1">
    <citation type="submission" date="2007-05" db="EMBL/GenBank/DDBJ databases">
        <title>Complete sequence of chromosome of Staphylococcus aureus subsp. aureus JH9.</title>
        <authorList>
            <consortium name="US DOE Joint Genome Institute"/>
            <person name="Copeland A."/>
            <person name="Lucas S."/>
            <person name="Lapidus A."/>
            <person name="Barry K."/>
            <person name="Detter J.C."/>
            <person name="Glavina del Rio T."/>
            <person name="Hammon N."/>
            <person name="Israni S."/>
            <person name="Pitluck S."/>
            <person name="Chain P."/>
            <person name="Malfatti S."/>
            <person name="Shin M."/>
            <person name="Vergez L."/>
            <person name="Schmutz J."/>
            <person name="Larimer F."/>
            <person name="Land M."/>
            <person name="Hauser L."/>
            <person name="Kyrpides N."/>
            <person name="Kim E."/>
            <person name="Tomasz A."/>
            <person name="Richardson P."/>
        </authorList>
    </citation>
    <scope>NUCLEOTIDE SEQUENCE [LARGE SCALE GENOMIC DNA]</scope>
    <source>
        <strain>JH9</strain>
    </source>
</reference>
<comment type="function">
    <text evidence="1">H(+)-stimulated, divalent metal cation uptake system.</text>
</comment>
<comment type="subcellular location">
    <subcellularLocation>
        <location evidence="1">Cell membrane</location>
        <topology evidence="1">Multi-pass membrane protein</topology>
    </subcellularLocation>
</comment>
<comment type="similarity">
    <text evidence="1">Belongs to the NRAMP family.</text>
</comment>
<keyword id="KW-1003">Cell membrane</keyword>
<keyword id="KW-0406">Ion transport</keyword>
<keyword id="KW-0472">Membrane</keyword>
<keyword id="KW-0769">Symport</keyword>
<keyword id="KW-0812">Transmembrane</keyword>
<keyword id="KW-1133">Transmembrane helix</keyword>
<keyword id="KW-0813">Transport</keyword>
<feature type="chain" id="PRO_1000078111" description="Divalent metal cation transporter MntH">
    <location>
        <begin position="1"/>
        <end position="450"/>
    </location>
</feature>
<feature type="transmembrane region" description="Helical" evidence="1">
    <location>
        <begin position="34"/>
        <end position="54"/>
    </location>
</feature>
<feature type="transmembrane region" description="Helical" evidence="1">
    <location>
        <begin position="61"/>
        <end position="81"/>
    </location>
</feature>
<feature type="transmembrane region" description="Helical" evidence="1">
    <location>
        <begin position="108"/>
        <end position="128"/>
    </location>
</feature>
<feature type="transmembrane region" description="Helical" evidence="1">
    <location>
        <begin position="141"/>
        <end position="161"/>
    </location>
</feature>
<feature type="transmembrane region" description="Helical" evidence="1">
    <location>
        <begin position="170"/>
        <end position="190"/>
    </location>
</feature>
<feature type="transmembrane region" description="Helical" evidence="1">
    <location>
        <begin position="212"/>
        <end position="232"/>
    </location>
</feature>
<feature type="transmembrane region" description="Helical" evidence="1">
    <location>
        <begin position="263"/>
        <end position="283"/>
    </location>
</feature>
<feature type="transmembrane region" description="Helical" evidence="1">
    <location>
        <begin position="305"/>
        <end position="325"/>
    </location>
</feature>
<feature type="transmembrane region" description="Helical" evidence="1">
    <location>
        <begin position="361"/>
        <end position="381"/>
    </location>
</feature>
<feature type="transmembrane region" description="Helical" evidence="1">
    <location>
        <begin position="383"/>
        <end position="403"/>
    </location>
</feature>
<feature type="transmembrane region" description="Helical" evidence="1">
    <location>
        <begin position="422"/>
        <end position="442"/>
    </location>
</feature>
<sequence length="450" mass="49724">MNNKRHSTNEQLSLDEINNTIKFDHRSSNKQKFLSFLGPGLLVAVGYMDPGNWITSMQGGAQYGYTLLFVILISSLSAMLLQSMTVRLGIATGMDLAQMTRHYLSRPIAIIFWIIAELAIIATDIAEVIGSAIALNLLFNIPLIVGALITVLDVFLLLFIMKYGFRKIEAIVGTLIFTVLFIFIFEVYISSPQLNAVLNGFIPHSEIITNNGILYIALGIIGATIMPHNLYLHSSIVQSRTYSRHNNEEKAQAIKFATIDSNIQLSIAFVVNCLLLVLGASLFFNSNADDLGGFYDLYHALKTEPVLGATMGAIMSTLFAVALLASGQNSTITGTLAGQIVMEGFLRLHIPNWLRRLITRSLAVIPVIVCLIIFKGNAAKIEQLLVFSQVFLSIALPFCLIPLQLATSNKDLMGPFYNKTWVNIISWTLIIILSILNVYLIVQTFQELQS</sequence>
<gene>
    <name evidence="1" type="primary">mntH</name>
    <name type="ordered locus">SaurJH9_1165</name>
</gene>
<name>MNTH_STAA9</name>
<evidence type="ECO:0000255" key="1">
    <source>
        <dbReference type="HAMAP-Rule" id="MF_00221"/>
    </source>
</evidence>